<gene>
    <name evidence="7" type="primary">PexRD24</name>
    <name type="ORF">PITG_04314</name>
</gene>
<proteinExistence type="evidence at protein level"/>
<accession>D0N0Z8</accession>
<name>RD24_PHYIT</name>
<dbReference type="EMBL" id="DS028122">
    <property type="protein sequence ID" value="EEY67311.1"/>
    <property type="molecule type" value="Genomic_DNA"/>
</dbReference>
<dbReference type="RefSeq" id="XP_002905959.1">
    <property type="nucleotide sequence ID" value="XM_002905913.1"/>
</dbReference>
<dbReference type="PDB" id="8PQ7">
    <property type="method" value="X-ray"/>
    <property type="resolution" value="2.10 A"/>
    <property type="chains" value="B/D=68-154"/>
</dbReference>
<dbReference type="PDBsum" id="8PQ7"/>
<dbReference type="SMR" id="D0N0Z8"/>
<dbReference type="STRING" id="403677.D0N0Z8"/>
<dbReference type="EnsemblProtists" id="PITG_04314T0">
    <property type="protein sequence ID" value="PITG_04314T0"/>
    <property type="gene ID" value="PITG_04314"/>
</dbReference>
<dbReference type="GeneID" id="9479996"/>
<dbReference type="KEGG" id="pif:PITG_04314"/>
<dbReference type="VEuPathDB" id="FungiDB:PITG_04314"/>
<dbReference type="eggNOG" id="ENOG502RGV3">
    <property type="taxonomic scope" value="Eukaryota"/>
</dbReference>
<dbReference type="HOGENOM" id="CLU_1707734_0_0_1"/>
<dbReference type="InParanoid" id="D0N0Z8"/>
<dbReference type="OMA" id="RIYKTNS"/>
<dbReference type="OrthoDB" id="129136at2759"/>
<dbReference type="Proteomes" id="UP000006643">
    <property type="component" value="Partially assembled WGS sequence"/>
</dbReference>
<dbReference type="GO" id="GO:0005576">
    <property type="term" value="C:extracellular region"/>
    <property type="evidence" value="ECO:0007669"/>
    <property type="project" value="UniProtKB-SubCell"/>
</dbReference>
<dbReference type="GO" id="GO:0044196">
    <property type="term" value="C:host cell nucleolus"/>
    <property type="evidence" value="ECO:0007669"/>
    <property type="project" value="UniProtKB-SubCell"/>
</dbReference>
<dbReference type="GO" id="GO:0044095">
    <property type="term" value="C:host cell nucleoplasm"/>
    <property type="evidence" value="ECO:0007669"/>
    <property type="project" value="UniProtKB-SubCell"/>
</dbReference>
<dbReference type="InterPro" id="IPR031825">
    <property type="entry name" value="RXLR"/>
</dbReference>
<dbReference type="Pfam" id="PF16810">
    <property type="entry name" value="RXLR"/>
    <property type="match status" value="1"/>
</dbReference>
<feature type="signal peptide" evidence="1">
    <location>
        <begin position="1"/>
        <end position="22"/>
    </location>
</feature>
<feature type="chain" id="PRO_5003012822" description="RxLR effector protein PexRD24">
    <location>
        <begin position="23"/>
        <end position="154"/>
    </location>
</feature>
<feature type="short sequence motif" description="RxLR-dEER" evidence="10">
    <location>
        <begin position="53"/>
        <end position="67"/>
    </location>
</feature>
<feature type="short sequence motif" description="PP1c-binding motif">
    <location>
        <position position="138"/>
    </location>
</feature>
<feature type="mutagenesis site" description="Abolishes the interaction with PP1c-1, PP1c-2 and PP1c-3, and attenuates infection." evidence="5">
    <original>KVTF</original>
    <variation>AAAA</variation>
    <location>
        <begin position="138"/>
        <end position="141"/>
    </location>
</feature>
<feature type="helix" evidence="11">
    <location>
        <begin position="75"/>
        <end position="83"/>
    </location>
</feature>
<feature type="helix" evidence="11">
    <location>
        <begin position="85"/>
        <end position="95"/>
    </location>
</feature>
<feature type="helix" evidence="11">
    <location>
        <begin position="100"/>
        <end position="107"/>
    </location>
</feature>
<feature type="helix" evidence="11">
    <location>
        <begin position="112"/>
        <end position="120"/>
    </location>
</feature>
<protein>
    <recommendedName>
        <fullName evidence="8">RxLR effector protein PexRD24</fullName>
    </recommendedName>
</protein>
<sequence>MHSSLLWLGAVVALLAVNNVTAVSTEANGQVALSTSKGQLAGERAEEENSIVRSLRAVETSEDEEERDLLGLFAKSKLKKMMKSESFKLKRFGEWDDFTVGYIREKLKNKYPDLLLNYLNVYKKAGNEIVRHANNPNKVTFSNKVRARIYKTNS</sequence>
<evidence type="ECO:0000255" key="1"/>
<evidence type="ECO:0000269" key="2">
    <source>
    </source>
</evidence>
<evidence type="ECO:0000269" key="3">
    <source>
    </source>
</evidence>
<evidence type="ECO:0000269" key="4">
    <source>
    </source>
</evidence>
<evidence type="ECO:0000269" key="5">
    <source>
    </source>
</evidence>
<evidence type="ECO:0000269" key="6">
    <source>
    </source>
</evidence>
<evidence type="ECO:0000303" key="7">
    <source>
    </source>
</evidence>
<evidence type="ECO:0000303" key="8">
    <source>
    </source>
</evidence>
<evidence type="ECO:0000305" key="9"/>
<evidence type="ECO:0000305" key="10">
    <source>
    </source>
</evidence>
<evidence type="ECO:0007829" key="11">
    <source>
        <dbReference type="PDB" id="8PQ7"/>
    </source>
</evidence>
<reference key="1">
    <citation type="journal article" date="2009" name="Nature">
        <title>Genome sequence and analysis of the Irish potato famine pathogen Phytophthora infestans.</title>
        <authorList>
            <consortium name="The Broad Institute Genome Sequencing Platform"/>
            <person name="Haas B.J."/>
            <person name="Kamoun S."/>
            <person name="Zody M.C."/>
            <person name="Jiang R.H."/>
            <person name="Handsaker R.E."/>
            <person name="Cano L.M."/>
            <person name="Grabherr M."/>
            <person name="Kodira C.D."/>
            <person name="Raffaele S."/>
            <person name="Torto-Alalibo T."/>
            <person name="Bozkurt T.O."/>
            <person name="Ah-Fong A.M."/>
            <person name="Alvarado L."/>
            <person name="Anderson V.L."/>
            <person name="Armstrong M.R."/>
            <person name="Avrova A."/>
            <person name="Baxter L."/>
            <person name="Beynon J."/>
            <person name="Boevink P.C."/>
            <person name="Bollmann S.R."/>
            <person name="Bos J.I."/>
            <person name="Bulone V."/>
            <person name="Cai G."/>
            <person name="Cakir C."/>
            <person name="Carrington J.C."/>
            <person name="Chawner M."/>
            <person name="Conti L."/>
            <person name="Costanzo S."/>
            <person name="Ewan R."/>
            <person name="Fahlgren N."/>
            <person name="Fischbach M.A."/>
            <person name="Fugelstad J."/>
            <person name="Gilroy E.M."/>
            <person name="Gnerre S."/>
            <person name="Green P.J."/>
            <person name="Grenville-Briggs L.J."/>
            <person name="Griffith J."/>
            <person name="Grunwald N.J."/>
            <person name="Horn K."/>
            <person name="Horner N.R."/>
            <person name="Hu C.H."/>
            <person name="Huitema E."/>
            <person name="Jeong D.H."/>
            <person name="Jones A.M."/>
            <person name="Jones J.D."/>
            <person name="Jones R.W."/>
            <person name="Karlsson E.K."/>
            <person name="Kunjeti S.G."/>
            <person name="Lamour K."/>
            <person name="Liu Z."/>
            <person name="Ma L."/>
            <person name="Maclean D."/>
            <person name="Chibucos M.C."/>
            <person name="McDonald H."/>
            <person name="McWalters J."/>
            <person name="Meijer H.J."/>
            <person name="Morgan W."/>
            <person name="Morris P.F."/>
            <person name="Munro C.A."/>
            <person name="O'Neill K."/>
            <person name="Ospina-Giraldo M."/>
            <person name="Pinzon A."/>
            <person name="Pritchard L."/>
            <person name="Ramsahoye B."/>
            <person name="Ren Q."/>
            <person name="Restrepo S."/>
            <person name="Roy S."/>
            <person name="Sadanandom A."/>
            <person name="Savidor A."/>
            <person name="Schornack S."/>
            <person name="Schwartz D.C."/>
            <person name="Schumann U.D."/>
            <person name="Schwessinger B."/>
            <person name="Seyer L."/>
            <person name="Sharpe T."/>
            <person name="Silvar C."/>
            <person name="Song J."/>
            <person name="Studholme D.J."/>
            <person name="Sykes S."/>
            <person name="Thines M."/>
            <person name="van de Vondervoort P.J."/>
            <person name="Phuntumart V."/>
            <person name="Wawra S."/>
            <person name="Weide R."/>
            <person name="Win J."/>
            <person name="Young C."/>
            <person name="Zhou S."/>
            <person name="Fry W."/>
            <person name="Meyers B.C."/>
            <person name="van West P."/>
            <person name="Ristaino J."/>
            <person name="Govers F."/>
            <person name="Birch P.R."/>
            <person name="Whisson S.C."/>
            <person name="Judelson H.S."/>
            <person name="Nusbaum C."/>
        </authorList>
    </citation>
    <scope>NUCLEOTIDE SEQUENCE [LARGE SCALE GENOMIC DNA]</scope>
    <scope>INDUCTION</scope>
    <source>
        <strain>T30-4</strain>
    </source>
</reference>
<reference key="2">
    <citation type="journal article" date="2009" name="Plant Cell">
        <title>In planta expression screens of Phytophthora infestans RXLR effectors reveal diverse phenotypes, including activation of the Solanum bulbocastanum disease resistance protein Rpi-blb2.</title>
        <authorList>
            <person name="Oh S.K."/>
            <person name="Young C."/>
            <person name="Lee M."/>
            <person name="Oliva R."/>
            <person name="Bozkurt T.O."/>
            <person name="Cano L.M."/>
            <person name="Win J."/>
            <person name="Bos J.I."/>
            <person name="Liu H.Y."/>
            <person name="van Damme M."/>
            <person name="Morgan W."/>
            <person name="Choi D."/>
            <person name="Van der Vossen E.A."/>
            <person name="Vleeshouwers V.G."/>
            <person name="Kamoun S."/>
        </authorList>
    </citation>
    <scope>IDENTIFICATION</scope>
    <scope>DOMAIN</scope>
    <scope>INDUCTION</scope>
</reference>
<reference key="3">
    <citation type="journal article" date="2012" name="PLoS Pathog.">
        <title>Genome analyses of an aggressive and invasive lineage of the Irish potato famine pathogen.</title>
        <authorList>
            <person name="Cooke D.E."/>
            <person name="Cano L.M."/>
            <person name="Raffaele S."/>
            <person name="Bain R.A."/>
            <person name="Cooke L.R."/>
            <person name="Etherington G.J."/>
            <person name="Deahl K.L."/>
            <person name="Farrer R.A."/>
            <person name="Gilroy E.M."/>
            <person name="Goss E.M."/>
            <person name="Gruenwald N.J."/>
            <person name="Hein I."/>
            <person name="MacLean D."/>
            <person name="McNicol J.W."/>
            <person name="Randall E."/>
            <person name="Oliva R.F."/>
            <person name="Pel M.A."/>
            <person name="Shaw D.S."/>
            <person name="Squires J.N."/>
            <person name="Taylor M.C."/>
            <person name="Vleeshouwers V.G."/>
            <person name="Birch P.R."/>
            <person name="Lees A.K."/>
            <person name="Kamoun S."/>
        </authorList>
    </citation>
    <scope>INDUCTION</scope>
</reference>
<reference key="4">
    <citation type="journal article" date="2016" name="Nat. Commun.">
        <title>A Phytophthora infestans RXLR effector targets plant PP1c isoforms that promote late blight disease.</title>
        <authorList>
            <person name="Boevink P.C."/>
            <person name="Wang X."/>
            <person name="McLellan H."/>
            <person name="He Q."/>
            <person name="Naqvi S."/>
            <person name="Armstrong M.R."/>
            <person name="Zhang W."/>
            <person name="Hein I."/>
            <person name="Gilroy E.M."/>
            <person name="Tian Z."/>
            <person name="Birch P.R."/>
        </authorList>
    </citation>
    <scope>FUNCTION</scope>
    <scope>SUBCELLULAR LOCATION</scope>
    <scope>INTERACTION WITH PP1C-1; PP1C-2 AND PP1C-3</scope>
    <scope>DOMAIN</scope>
    <scope>MUTAGENESIS OF 138-LYS--PHE-141</scope>
</reference>
<reference key="5">
    <citation type="journal article" date="2017" name="New Phytol.">
        <title>Delivery of cytoplasmic and apoplastic effectors from Phytophthora infestans haustoria by distinct secretion pathways.</title>
        <authorList>
            <person name="Wang S."/>
            <person name="Boevink P.C."/>
            <person name="Welsh L."/>
            <person name="Zhang R."/>
            <person name="Whisson S.C."/>
            <person name="Birch P.R.J."/>
        </authorList>
    </citation>
    <scope>SUBCELLULAR LOCATION</scope>
</reference>
<organism>
    <name type="scientific">Phytophthora infestans (strain T30-4)</name>
    <name type="common">Potato late blight agent</name>
    <dbReference type="NCBI Taxonomy" id="403677"/>
    <lineage>
        <taxon>Eukaryota</taxon>
        <taxon>Sar</taxon>
        <taxon>Stramenopiles</taxon>
        <taxon>Oomycota</taxon>
        <taxon>Peronosporales</taxon>
        <taxon>Peronosporaceae</taxon>
        <taxon>Phytophthora</taxon>
    </lineage>
</organism>
<keyword id="KW-0002">3D-structure</keyword>
<keyword id="KW-1048">Host nucleus</keyword>
<keyword id="KW-1185">Reference proteome</keyword>
<keyword id="KW-0964">Secreted</keyword>
<keyword id="KW-0732">Signal</keyword>
<keyword id="KW-0843">Virulence</keyword>
<comment type="function">
    <text evidence="5">Effector that interacts with isoforms of host protein phosphatase type 1c (PP1c), mimicking a regulatory subunit and causing their re-localization within the host nucleus (PubMed:26822079). The holoenzymes formed with PP1c isoforms act to promote late blight by attenuating jasmonic acid (JA)- and salicylic acid (SA)-mediated transcriptional responses of the host plant (PubMed:26822079).</text>
</comment>
<comment type="subunit">
    <text evidence="5">Interacts with the potato PP1c family proteins PP1c-1, PP1c-2 and PP1c-3.</text>
</comment>
<comment type="subcellular location">
    <subcellularLocation>
        <location evidence="5 6">Secreted</location>
    </subcellularLocation>
    <subcellularLocation>
        <location evidence="5 6">Host nucleus</location>
        <location evidence="5 6">Host nucleoplasm</location>
    </subcellularLocation>
    <subcellularLocation>
        <location evidence="5 6">Host nucleus</location>
        <location evidence="5 6">Host nucleolus</location>
    </subcellularLocation>
</comment>
<comment type="induction">
    <text evidence="2 3 4">Expression is up-regulated during the biotrophic phase of infection on potato plants.</text>
</comment>
<comment type="domain">
    <text evidence="10">The RxLR-dEER motif acts to carry the protein into the host cell cytoplasm through binding to cell surface phosphatidylinositol-3-phosphate.</text>
</comment>
<comment type="domain">
    <text evidence="5">The KVTF motif (residues 138 to 141) is required for the interaction with the PP1c family proteins PP1c-1, PP1c-2 and PP1c-3.</text>
</comment>
<comment type="similarity">
    <text evidence="9">Belongs to the RxLR effector family.</text>
</comment>